<reference key="1">
    <citation type="journal article" date="2000" name="Nature">
        <title>Sequence and analysis of chromosome 3 of the plant Arabidopsis thaliana.</title>
        <authorList>
            <person name="Salanoubat M."/>
            <person name="Lemcke K."/>
            <person name="Rieger M."/>
            <person name="Ansorge W."/>
            <person name="Unseld M."/>
            <person name="Fartmann B."/>
            <person name="Valle G."/>
            <person name="Bloecker H."/>
            <person name="Perez-Alonso M."/>
            <person name="Obermaier B."/>
            <person name="Delseny M."/>
            <person name="Boutry M."/>
            <person name="Grivell L.A."/>
            <person name="Mache R."/>
            <person name="Puigdomenech P."/>
            <person name="De Simone V."/>
            <person name="Choisne N."/>
            <person name="Artiguenave F."/>
            <person name="Robert C."/>
            <person name="Brottier P."/>
            <person name="Wincker P."/>
            <person name="Cattolico L."/>
            <person name="Weissenbach J."/>
            <person name="Saurin W."/>
            <person name="Quetier F."/>
            <person name="Schaefer M."/>
            <person name="Mueller-Auer S."/>
            <person name="Gabel C."/>
            <person name="Fuchs M."/>
            <person name="Benes V."/>
            <person name="Wurmbach E."/>
            <person name="Drzonek H."/>
            <person name="Erfle H."/>
            <person name="Jordan N."/>
            <person name="Bangert S."/>
            <person name="Wiedelmann R."/>
            <person name="Kranz H."/>
            <person name="Voss H."/>
            <person name="Holland R."/>
            <person name="Brandt P."/>
            <person name="Nyakatura G."/>
            <person name="Vezzi A."/>
            <person name="D'Angelo M."/>
            <person name="Pallavicini A."/>
            <person name="Toppo S."/>
            <person name="Simionati B."/>
            <person name="Conrad A."/>
            <person name="Hornischer K."/>
            <person name="Kauer G."/>
            <person name="Loehnert T.-H."/>
            <person name="Nordsiek G."/>
            <person name="Reichelt J."/>
            <person name="Scharfe M."/>
            <person name="Schoen O."/>
            <person name="Bargues M."/>
            <person name="Terol J."/>
            <person name="Climent J."/>
            <person name="Navarro P."/>
            <person name="Collado C."/>
            <person name="Perez-Perez A."/>
            <person name="Ottenwaelder B."/>
            <person name="Duchemin D."/>
            <person name="Cooke R."/>
            <person name="Laudie M."/>
            <person name="Berger-Llauro C."/>
            <person name="Purnelle B."/>
            <person name="Masuy D."/>
            <person name="de Haan M."/>
            <person name="Maarse A.C."/>
            <person name="Alcaraz J.-P."/>
            <person name="Cottet A."/>
            <person name="Casacuberta E."/>
            <person name="Monfort A."/>
            <person name="Argiriou A."/>
            <person name="Flores M."/>
            <person name="Liguori R."/>
            <person name="Vitale D."/>
            <person name="Mannhaupt G."/>
            <person name="Haase D."/>
            <person name="Schoof H."/>
            <person name="Rudd S."/>
            <person name="Zaccaria P."/>
            <person name="Mewes H.-W."/>
            <person name="Mayer K.F.X."/>
            <person name="Kaul S."/>
            <person name="Town C.D."/>
            <person name="Koo H.L."/>
            <person name="Tallon L.J."/>
            <person name="Jenkins J."/>
            <person name="Rooney T."/>
            <person name="Rizzo M."/>
            <person name="Walts A."/>
            <person name="Utterback T."/>
            <person name="Fujii C.Y."/>
            <person name="Shea T.P."/>
            <person name="Creasy T.H."/>
            <person name="Haas B."/>
            <person name="Maiti R."/>
            <person name="Wu D."/>
            <person name="Peterson J."/>
            <person name="Van Aken S."/>
            <person name="Pai G."/>
            <person name="Militscher J."/>
            <person name="Sellers P."/>
            <person name="Gill J.E."/>
            <person name="Feldblyum T.V."/>
            <person name="Preuss D."/>
            <person name="Lin X."/>
            <person name="Nierman W.C."/>
            <person name="Salzberg S.L."/>
            <person name="White O."/>
            <person name="Venter J.C."/>
            <person name="Fraser C.M."/>
            <person name="Kaneko T."/>
            <person name="Nakamura Y."/>
            <person name="Sato S."/>
            <person name="Kato T."/>
            <person name="Asamizu E."/>
            <person name="Sasamoto S."/>
            <person name="Kimura T."/>
            <person name="Idesawa K."/>
            <person name="Kawashima K."/>
            <person name="Kishida Y."/>
            <person name="Kiyokawa C."/>
            <person name="Kohara M."/>
            <person name="Matsumoto M."/>
            <person name="Matsuno A."/>
            <person name="Muraki A."/>
            <person name="Nakayama S."/>
            <person name="Nakazaki N."/>
            <person name="Shinpo S."/>
            <person name="Takeuchi C."/>
            <person name="Wada T."/>
            <person name="Watanabe A."/>
            <person name="Yamada M."/>
            <person name="Yasuda M."/>
            <person name="Tabata S."/>
        </authorList>
    </citation>
    <scope>NUCLEOTIDE SEQUENCE [LARGE SCALE GENOMIC DNA]</scope>
    <source>
        <strain>cv. Columbia</strain>
    </source>
</reference>
<reference key="2">
    <citation type="journal article" date="2017" name="Plant J.">
        <title>Araport11: a complete reannotation of the Arabidopsis thaliana reference genome.</title>
        <authorList>
            <person name="Cheng C.Y."/>
            <person name="Krishnakumar V."/>
            <person name="Chan A.P."/>
            <person name="Thibaud-Nissen F."/>
            <person name="Schobel S."/>
            <person name="Town C.D."/>
        </authorList>
    </citation>
    <scope>GENOME REANNOTATION</scope>
    <source>
        <strain>cv. Columbia</strain>
    </source>
</reference>
<reference key="3">
    <citation type="journal article" date="2003" name="Science">
        <title>Empirical analysis of transcriptional activity in the Arabidopsis genome.</title>
        <authorList>
            <person name="Yamada K."/>
            <person name="Lim J."/>
            <person name="Dale J.M."/>
            <person name="Chen H."/>
            <person name="Shinn P."/>
            <person name="Palm C.J."/>
            <person name="Southwick A.M."/>
            <person name="Wu H.C."/>
            <person name="Kim C.J."/>
            <person name="Nguyen M."/>
            <person name="Pham P.K."/>
            <person name="Cheuk R.F."/>
            <person name="Karlin-Newmann G."/>
            <person name="Liu S.X."/>
            <person name="Lam B."/>
            <person name="Sakano H."/>
            <person name="Wu T."/>
            <person name="Yu G."/>
            <person name="Miranda M."/>
            <person name="Quach H.L."/>
            <person name="Tripp M."/>
            <person name="Chang C.H."/>
            <person name="Lee J.M."/>
            <person name="Toriumi M.J."/>
            <person name="Chan M.M."/>
            <person name="Tang C.C."/>
            <person name="Onodera C.S."/>
            <person name="Deng J.M."/>
            <person name="Akiyama K."/>
            <person name="Ansari Y."/>
            <person name="Arakawa T."/>
            <person name="Banh J."/>
            <person name="Banno F."/>
            <person name="Bowser L."/>
            <person name="Brooks S.Y."/>
            <person name="Carninci P."/>
            <person name="Chao Q."/>
            <person name="Choy N."/>
            <person name="Enju A."/>
            <person name="Goldsmith A.D."/>
            <person name="Gurjal M."/>
            <person name="Hansen N.F."/>
            <person name="Hayashizaki Y."/>
            <person name="Johnson-Hopson C."/>
            <person name="Hsuan V.W."/>
            <person name="Iida K."/>
            <person name="Karnes M."/>
            <person name="Khan S."/>
            <person name="Koesema E."/>
            <person name="Ishida J."/>
            <person name="Jiang P.X."/>
            <person name="Jones T."/>
            <person name="Kawai J."/>
            <person name="Kamiya A."/>
            <person name="Meyers C."/>
            <person name="Nakajima M."/>
            <person name="Narusaka M."/>
            <person name="Seki M."/>
            <person name="Sakurai T."/>
            <person name="Satou M."/>
            <person name="Tamse R."/>
            <person name="Vaysberg M."/>
            <person name="Wallender E.K."/>
            <person name="Wong C."/>
            <person name="Yamamura Y."/>
            <person name="Yuan S."/>
            <person name="Shinozaki K."/>
            <person name="Davis R.W."/>
            <person name="Theologis A."/>
            <person name="Ecker J.R."/>
        </authorList>
    </citation>
    <scope>NUCLEOTIDE SEQUENCE [LARGE SCALE MRNA]</scope>
    <source>
        <strain>cv. Columbia</strain>
    </source>
</reference>
<reference key="4">
    <citation type="submission" date="2002-03" db="EMBL/GenBank/DDBJ databases">
        <title>Full-length cDNA from Arabidopsis thaliana.</title>
        <authorList>
            <person name="Brover V.V."/>
            <person name="Troukhan M.E."/>
            <person name="Alexandrov N.A."/>
            <person name="Lu Y.-P."/>
            <person name="Flavell R.B."/>
            <person name="Feldmann K.A."/>
        </authorList>
    </citation>
    <scope>NUCLEOTIDE SEQUENCE [LARGE SCALE MRNA]</scope>
</reference>
<reference key="5">
    <citation type="journal article" date="2009" name="Plant Cell">
        <title>DGAT1 and PDAT1 acyltransferases have overlapping functions in Arabidopsis triacylglycerol biosynthesis and are essential for normal pollen and seed development.</title>
        <authorList>
            <person name="Zhang M."/>
            <person name="Fan J."/>
            <person name="Taylor D.C."/>
            <person name="Ohlrogge J.B."/>
        </authorList>
    </citation>
    <scope>DISRUPTION PHENOTYPE</scope>
</reference>
<reference key="6">
    <citation type="journal article" date="2010" name="Lipids">
        <title>DGAT1, DGAT2 and PDAT expression in seeds and other tissues of epoxy and hydroxy fatty acid accumulating plants.</title>
        <authorList>
            <person name="Li R."/>
            <person name="Yu K."/>
            <person name="Hildebrand D.F."/>
        </authorList>
    </citation>
    <scope>TISSUE SPECIFICITY</scope>
</reference>
<reference key="7">
    <citation type="journal article" date="2012" name="Folia Histochem. Cytobiol.">
        <title>DGAT2 revealed by the immunogold technique in Arabidopsis thaliana lipid bodies associated with microtubules.</title>
        <authorList>
            <person name="Kwiatkowska M."/>
            <person name="Stepinski D."/>
            <person name="Poplonska K."/>
            <person name="Wojtczak A."/>
            <person name="Polit J.T."/>
        </authorList>
    </citation>
    <scope>SUBCELLULAR LOCATION</scope>
    <scope>TISSUE SPECIFICITY</scope>
</reference>
<reference key="8">
    <citation type="journal article" date="2013" name="FEBS Lett.">
        <title>AtDGAT2 is a functional acyl-CoA:diacylglycerol acyltransferase and displays different acyl-CoA substrate preferences than AtDGAT1.</title>
        <authorList>
            <person name="Zhou X.R."/>
            <person name="Shrestha P."/>
            <person name="Yin F."/>
            <person name="Petrie J.R."/>
            <person name="Singh S.P."/>
        </authorList>
    </citation>
    <scope>FUNCTION</scope>
    <scope>CATALYTIC ACTIVITY</scope>
</reference>
<reference key="9">
    <citation type="journal article" date="2014" name="PLoS ONE">
        <title>Function and localization of the Arabidopsis thaliana diacylglycerol acyltransferase DGAT2 expressed in yeast.</title>
        <authorList>
            <person name="Ayme L."/>
            <person name="Baud S."/>
            <person name="Dubreucq B."/>
            <person name="Joffre F."/>
            <person name="Chardot T."/>
        </authorList>
    </citation>
    <scope>FUNCTION</scope>
</reference>
<evidence type="ECO:0000255" key="1"/>
<evidence type="ECO:0000269" key="2">
    <source>
    </source>
</evidence>
<evidence type="ECO:0000269" key="3">
    <source>
    </source>
</evidence>
<evidence type="ECO:0000269" key="4">
    <source>
    </source>
</evidence>
<evidence type="ECO:0000269" key="5">
    <source>
    </source>
</evidence>
<evidence type="ECO:0000269" key="6">
    <source>
    </source>
</evidence>
<evidence type="ECO:0000303" key="7">
    <source>
    </source>
</evidence>
<evidence type="ECO:0000303" key="8">
    <source>
    </source>
</evidence>
<evidence type="ECO:0000305" key="9"/>
<accession>Q9ASU1</accession>
<accession>Q9SCZ7</accession>
<proteinExistence type="evidence at protein level"/>
<keyword id="KW-0012">Acyltransferase</keyword>
<keyword id="KW-0256">Endoplasmic reticulum</keyword>
<keyword id="KW-0319">Glycerol metabolism</keyword>
<keyword id="KW-0444">Lipid biosynthesis</keyword>
<keyword id="KW-0551">Lipid droplet</keyword>
<keyword id="KW-0443">Lipid metabolism</keyword>
<keyword id="KW-0472">Membrane</keyword>
<keyword id="KW-1185">Reference proteome</keyword>
<keyword id="KW-0808">Transferase</keyword>
<keyword id="KW-0812">Transmembrane</keyword>
<keyword id="KW-1133">Transmembrane helix</keyword>
<feature type="chain" id="PRO_0000398614" description="Diacylglycerol O-acyltransferase 2">
    <location>
        <begin position="1"/>
        <end position="314"/>
    </location>
</feature>
<feature type="transmembrane region" description="Helical" evidence="1">
    <location>
        <begin position="18"/>
        <end position="38"/>
    </location>
</feature>
<feature type="transmembrane region" description="Helical" evidence="1">
    <location>
        <begin position="41"/>
        <end position="61"/>
    </location>
</feature>
<sequence>MGGSREFRAEEHSNQFHSIIAMAIWLGAIHFNVALVLCSLIFLPPSLSLMVLGLLSLFIFIPIDHRSKYGRKLARYICKHACNYFPVSLYVEDYEAFQPNRAYVFGYEPHSVLPIGVVALCDLTGFMPIPNIKVLASSAIFYTPFLRHIWTWLGLTAASRKNFTSLLDSGYSCVLVPGGVQETFHMQHDAENVFLSRRRGFVRIAMEQGSPLVPVFCFGQARVYKWWKPDCDLYLKLSRAIRFTPICFWGVFGSPLPCRQPMHVVVGKPIEVTKTLKPTDEEIAKFHGQYVEALRDLFERHKSRVGYDLELKIL</sequence>
<dbReference type="EC" id="2.3.1.20" evidence="5"/>
<dbReference type="EMBL" id="AL133452">
    <property type="protein sequence ID" value="CAB63016.1"/>
    <property type="status" value="ALT_SEQ"/>
    <property type="molecule type" value="Genomic_DNA"/>
</dbReference>
<dbReference type="EMBL" id="CP002686">
    <property type="protein sequence ID" value="AEE78802.1"/>
    <property type="molecule type" value="Genomic_DNA"/>
</dbReference>
<dbReference type="EMBL" id="AF361832">
    <property type="protein sequence ID" value="AAK32844.1"/>
    <property type="molecule type" value="mRNA"/>
</dbReference>
<dbReference type="EMBL" id="AY078045">
    <property type="protein sequence ID" value="AAL77746.1"/>
    <property type="molecule type" value="mRNA"/>
</dbReference>
<dbReference type="EMBL" id="AY087571">
    <property type="protein sequence ID" value="AAM65113.1"/>
    <property type="molecule type" value="mRNA"/>
</dbReference>
<dbReference type="PIR" id="T45783">
    <property type="entry name" value="T45783"/>
</dbReference>
<dbReference type="RefSeq" id="NP_566952.1">
    <property type="nucleotide sequence ID" value="NM_115011.3"/>
</dbReference>
<dbReference type="FunCoup" id="Q9ASU1">
    <property type="interactions" value="1238"/>
</dbReference>
<dbReference type="STRING" id="3702.Q9ASU1"/>
<dbReference type="SwissLipids" id="SLP:000001912"/>
<dbReference type="PaxDb" id="3702-AT3G51520.1"/>
<dbReference type="ProteomicsDB" id="224034"/>
<dbReference type="EnsemblPlants" id="AT3G51520.1">
    <property type="protein sequence ID" value="AT3G51520.1"/>
    <property type="gene ID" value="AT3G51520"/>
</dbReference>
<dbReference type="GeneID" id="824315"/>
<dbReference type="Gramene" id="AT3G51520.1">
    <property type="protein sequence ID" value="AT3G51520.1"/>
    <property type="gene ID" value="AT3G51520"/>
</dbReference>
<dbReference type="KEGG" id="ath:AT3G51520"/>
<dbReference type="Araport" id="AT3G51520"/>
<dbReference type="TAIR" id="AT3G51520">
    <property type="gene designation" value="DGAT2"/>
</dbReference>
<dbReference type="eggNOG" id="KOG0831">
    <property type="taxonomic scope" value="Eukaryota"/>
</dbReference>
<dbReference type="HOGENOM" id="CLU_023995_2_0_1"/>
<dbReference type="InParanoid" id="Q9ASU1"/>
<dbReference type="OMA" id="FWFTCAN"/>
<dbReference type="OrthoDB" id="264532at2759"/>
<dbReference type="PhylomeDB" id="Q9ASU1"/>
<dbReference type="BioCyc" id="ARA:AT3G51520-MONOMER"/>
<dbReference type="BRENDA" id="2.3.1.20">
    <property type="organism ID" value="399"/>
</dbReference>
<dbReference type="UniPathway" id="UPA00282"/>
<dbReference type="PRO" id="PR:Q9ASU1"/>
<dbReference type="Proteomes" id="UP000006548">
    <property type="component" value="Chromosome 3"/>
</dbReference>
<dbReference type="ExpressionAtlas" id="Q9ASU1">
    <property type="expression patterns" value="baseline and differential"/>
</dbReference>
<dbReference type="GO" id="GO:0005789">
    <property type="term" value="C:endoplasmic reticulum membrane"/>
    <property type="evidence" value="ECO:0000314"/>
    <property type="project" value="UniProtKB"/>
</dbReference>
<dbReference type="GO" id="GO:0005811">
    <property type="term" value="C:lipid droplet"/>
    <property type="evidence" value="ECO:0000314"/>
    <property type="project" value="TAIR"/>
</dbReference>
<dbReference type="GO" id="GO:0004144">
    <property type="term" value="F:diacylglycerol O-acyltransferase activity"/>
    <property type="evidence" value="ECO:0000314"/>
    <property type="project" value="TAIR"/>
</dbReference>
<dbReference type="GO" id="GO:0006071">
    <property type="term" value="P:glycerol metabolic process"/>
    <property type="evidence" value="ECO:0007669"/>
    <property type="project" value="UniProtKB-KW"/>
</dbReference>
<dbReference type="GO" id="GO:0034389">
    <property type="term" value="P:lipid droplet organization"/>
    <property type="evidence" value="ECO:0000314"/>
    <property type="project" value="TAIR"/>
</dbReference>
<dbReference type="GO" id="GO:0046460">
    <property type="term" value="P:neutral lipid biosynthetic process"/>
    <property type="evidence" value="ECO:0000314"/>
    <property type="project" value="TAIR"/>
</dbReference>
<dbReference type="GO" id="GO:0019432">
    <property type="term" value="P:triglyceride biosynthetic process"/>
    <property type="evidence" value="ECO:0000314"/>
    <property type="project" value="TAIR"/>
</dbReference>
<dbReference type="CDD" id="cd07987">
    <property type="entry name" value="LPLAT_MGAT-like"/>
    <property type="match status" value="1"/>
</dbReference>
<dbReference type="InterPro" id="IPR007130">
    <property type="entry name" value="DAGAT"/>
</dbReference>
<dbReference type="PANTHER" id="PTHR12317">
    <property type="entry name" value="DIACYLGLYCEROL O-ACYLTRANSFERASE"/>
    <property type="match status" value="1"/>
</dbReference>
<dbReference type="PANTHER" id="PTHR12317:SF63">
    <property type="entry name" value="DIACYLGLYCEROL O-ACYLTRANSFERASE 2"/>
    <property type="match status" value="1"/>
</dbReference>
<dbReference type="Pfam" id="PF03982">
    <property type="entry name" value="DAGAT"/>
    <property type="match status" value="1"/>
</dbReference>
<gene>
    <name evidence="7" type="primary">DGAT2</name>
    <name type="ordered locus">At3g51520</name>
    <name type="ORF">F26O13.160</name>
</gene>
<name>DGAT2_ARATH</name>
<comment type="function">
    <text evidence="5 6">Involved in triacylglycerol (TAG) synthesis. Catalyzes the acylation of the sn-3 hydroxy group of sn-1,2-diacylglycerol using acyl-CoA (PubMed:23770095, PubMed:24663078). Can use oleoyl-CoA, linoleoyl-CoA and linolenoyl-CoA as substrates. Has substrate preference for linolenoyl-CoA or oleoyl-CoA compared to linoleoyl-CoA (PubMed:23770095).</text>
</comment>
<comment type="catalytic activity">
    <reaction evidence="5">
        <text>an acyl-CoA + a 1,2-diacyl-sn-glycerol = a triacyl-sn-glycerol + CoA</text>
        <dbReference type="Rhea" id="RHEA:10868"/>
        <dbReference type="ChEBI" id="CHEBI:17815"/>
        <dbReference type="ChEBI" id="CHEBI:57287"/>
        <dbReference type="ChEBI" id="CHEBI:58342"/>
        <dbReference type="ChEBI" id="CHEBI:64615"/>
        <dbReference type="EC" id="2.3.1.20"/>
    </reaction>
</comment>
<comment type="catalytic activity">
    <reaction evidence="5">
        <text>1,2-dihexanoyl-sn-glycerol + (9Z)-octadecenoyl-CoA = 1,2-dihexanoyl-3-(9Z-octadecenoyl)-sn-glycerol + CoA</text>
        <dbReference type="Rhea" id="RHEA:56540"/>
        <dbReference type="ChEBI" id="CHEBI:57287"/>
        <dbReference type="ChEBI" id="CHEBI:57387"/>
        <dbReference type="ChEBI" id="CHEBI:140526"/>
        <dbReference type="ChEBI" id="CHEBI:140527"/>
    </reaction>
    <physiologicalReaction direction="left-to-right" evidence="5">
        <dbReference type="Rhea" id="RHEA:56541"/>
    </physiologicalReaction>
</comment>
<comment type="pathway">
    <text>Glycerolipid metabolism; triacylglycerol biosynthesis.</text>
</comment>
<comment type="subcellular location">
    <subcellularLocation>
        <location evidence="4">Endoplasmic reticulum membrane</location>
        <topology evidence="1">Multi-pass membrane protein</topology>
    </subcellularLocation>
    <subcellularLocation>
        <location evidence="4">Lipid droplet</location>
    </subcellularLocation>
</comment>
<comment type="tissue specificity">
    <text evidence="3 4">Ubiquitous. Lower levels in seeds than in other tissues. Expressed in embryo and root meristematic cells (PubMed:23042274).</text>
</comment>
<comment type="disruption phenotype">
    <text evidence="2">No decrease in oil content.</text>
</comment>
<comment type="similarity">
    <text evidence="9">Belongs to the diacylglycerol acyltransferase family.</text>
</comment>
<comment type="sequence caution" evidence="9">
    <conflict type="erroneous gene model prediction">
        <sequence resource="EMBL-CDS" id="CAB63016"/>
    </conflict>
</comment>
<organism>
    <name type="scientific">Arabidopsis thaliana</name>
    <name type="common">Mouse-ear cress</name>
    <dbReference type="NCBI Taxonomy" id="3702"/>
    <lineage>
        <taxon>Eukaryota</taxon>
        <taxon>Viridiplantae</taxon>
        <taxon>Streptophyta</taxon>
        <taxon>Embryophyta</taxon>
        <taxon>Tracheophyta</taxon>
        <taxon>Spermatophyta</taxon>
        <taxon>Magnoliopsida</taxon>
        <taxon>eudicotyledons</taxon>
        <taxon>Gunneridae</taxon>
        <taxon>Pentapetalae</taxon>
        <taxon>rosids</taxon>
        <taxon>malvids</taxon>
        <taxon>Brassicales</taxon>
        <taxon>Brassicaceae</taxon>
        <taxon>Camelineae</taxon>
        <taxon>Arabidopsis</taxon>
    </lineage>
</organism>
<protein>
    <recommendedName>
        <fullName evidence="9">Diacylglycerol O-acyltransferase 2</fullName>
        <shortName evidence="8">AtDGAT2</shortName>
        <ecNumber evidence="5">2.3.1.20</ecNumber>
    </recommendedName>
</protein>